<proteinExistence type="evidence at protein level"/>
<sequence length="168" mass="19046">MLAIHSLSSTPCSSGLTSPPKSTLLTKSSFHGLRLPSVNLSSSLRLRVQTPPSSVVVMVKKEDELKELRTKTNEQLNEEILQLKGELFMLRLQRSARENFKPSDFGRMRKRVARMLTVKREREIEQGVGKRLSRKLDKAWKRSIVVRPPPSLKKLQEKATAEAEAEKA</sequence>
<accession>P82248</accession>
<accession>A0A0K9R7W8</accession>
<feature type="transit peptide" description="Chloroplast" evidence="2">
    <location>
        <begin position="1"/>
        <end position="58"/>
    </location>
</feature>
<feature type="chain" id="PRO_0000130532" description="Large ribosomal subunit protein uL29c">
    <location>
        <begin position="59"/>
        <end position="168"/>
    </location>
</feature>
<feature type="region of interest" description="Disordered" evidence="1">
    <location>
        <begin position="1"/>
        <end position="20"/>
    </location>
</feature>
<feature type="sequence conflict" description="In Ref. 2; AA sequence." evidence="6" ref="2">
    <original>Q</original>
    <variation>E</variation>
    <location>
        <position position="75"/>
    </location>
</feature>
<feature type="helix" evidence="9">
    <location>
        <begin position="60"/>
        <end position="69"/>
    </location>
</feature>
<feature type="helix" evidence="9">
    <location>
        <begin position="73"/>
        <end position="96"/>
    </location>
</feature>
<feature type="helix" evidence="9">
    <location>
        <begin position="103"/>
        <end position="126"/>
    </location>
</feature>
<feature type="helix" evidence="9">
    <location>
        <begin position="130"/>
        <end position="143"/>
    </location>
</feature>
<feature type="turn" evidence="9">
    <location>
        <begin position="150"/>
        <end position="153"/>
    </location>
</feature>
<feature type="helix" evidence="9">
    <location>
        <begin position="154"/>
        <end position="158"/>
    </location>
</feature>
<dbReference type="EMBL" id="KQ147688">
    <property type="protein sequence ID" value="KNA15596.1"/>
    <property type="molecule type" value="Genomic_DNA"/>
</dbReference>
<dbReference type="PDB" id="4V61">
    <property type="method" value="EM"/>
    <property type="resolution" value="9.40 A"/>
    <property type="chains" value="Z=64-79"/>
</dbReference>
<dbReference type="PDB" id="5H1S">
    <property type="method" value="EM"/>
    <property type="resolution" value="3.50 A"/>
    <property type="chains" value="Z=60-168"/>
</dbReference>
<dbReference type="PDB" id="5MLC">
    <property type="method" value="EM"/>
    <property type="resolution" value="3.90 A"/>
    <property type="chains" value="Z=1-168"/>
</dbReference>
<dbReference type="PDB" id="5MMI">
    <property type="method" value="EM"/>
    <property type="resolution" value="3.25 A"/>
    <property type="chains" value="Z=1-168"/>
</dbReference>
<dbReference type="PDB" id="5MMM">
    <property type="method" value="EM"/>
    <property type="resolution" value="3.40 A"/>
    <property type="chains" value="Z=1-168"/>
</dbReference>
<dbReference type="PDB" id="5X8P">
    <property type="method" value="EM"/>
    <property type="resolution" value="3.40 A"/>
    <property type="chains" value="Z=60-168"/>
</dbReference>
<dbReference type="PDB" id="5X8T">
    <property type="method" value="EM"/>
    <property type="resolution" value="3.30 A"/>
    <property type="chains" value="Z=60-168"/>
</dbReference>
<dbReference type="PDB" id="6ERI">
    <property type="method" value="EM"/>
    <property type="resolution" value="3.00 A"/>
    <property type="chains" value="AY=59-157"/>
</dbReference>
<dbReference type="PDBsum" id="4V61"/>
<dbReference type="PDBsum" id="5H1S"/>
<dbReference type="PDBsum" id="5MLC"/>
<dbReference type="PDBsum" id="5MMI"/>
<dbReference type="PDBsum" id="5MMM"/>
<dbReference type="PDBsum" id="5X8P"/>
<dbReference type="PDBsum" id="5X8T"/>
<dbReference type="PDBsum" id="6ERI"/>
<dbReference type="EMDB" id="EMD-3525"/>
<dbReference type="EMDB" id="EMD-3531"/>
<dbReference type="EMDB" id="EMD-3533"/>
<dbReference type="EMDB" id="EMD-3941"/>
<dbReference type="EMDB" id="EMD-6709"/>
<dbReference type="EMDB" id="EMD-6711"/>
<dbReference type="EMDB" id="EMD-9572"/>
<dbReference type="SMR" id="P82248"/>
<dbReference type="IntAct" id="P82248">
    <property type="interactions" value="1"/>
</dbReference>
<dbReference type="STRING" id="3562.P82248"/>
<dbReference type="OrthoDB" id="528635at2759"/>
<dbReference type="Proteomes" id="UP001155700">
    <property type="component" value="Unplaced"/>
</dbReference>
<dbReference type="GO" id="GO:0009507">
    <property type="term" value="C:chloroplast"/>
    <property type="evidence" value="ECO:0007669"/>
    <property type="project" value="UniProtKB-SubCell"/>
</dbReference>
<dbReference type="GO" id="GO:1990904">
    <property type="term" value="C:ribonucleoprotein complex"/>
    <property type="evidence" value="ECO:0007669"/>
    <property type="project" value="UniProtKB-KW"/>
</dbReference>
<dbReference type="GO" id="GO:0005840">
    <property type="term" value="C:ribosome"/>
    <property type="evidence" value="ECO:0007669"/>
    <property type="project" value="UniProtKB-KW"/>
</dbReference>
<dbReference type="GO" id="GO:0003735">
    <property type="term" value="F:structural constituent of ribosome"/>
    <property type="evidence" value="ECO:0007669"/>
    <property type="project" value="InterPro"/>
</dbReference>
<dbReference type="GO" id="GO:0006412">
    <property type="term" value="P:translation"/>
    <property type="evidence" value="ECO:0007669"/>
    <property type="project" value="InterPro"/>
</dbReference>
<dbReference type="CDD" id="cd00427">
    <property type="entry name" value="Ribosomal_L29_HIP"/>
    <property type="match status" value="1"/>
</dbReference>
<dbReference type="Gene3D" id="1.10.287.310">
    <property type="match status" value="1"/>
</dbReference>
<dbReference type="HAMAP" id="MF_00374">
    <property type="entry name" value="Ribosomal_uL29"/>
    <property type="match status" value="1"/>
</dbReference>
<dbReference type="InterPro" id="IPR050063">
    <property type="entry name" value="Ribosomal_protein_uL29"/>
</dbReference>
<dbReference type="InterPro" id="IPR001854">
    <property type="entry name" value="Ribosomal_uL29"/>
</dbReference>
<dbReference type="InterPro" id="IPR036049">
    <property type="entry name" value="Ribosomal_uL29_sf"/>
</dbReference>
<dbReference type="NCBIfam" id="TIGR00012">
    <property type="entry name" value="L29"/>
    <property type="match status" value="1"/>
</dbReference>
<dbReference type="PANTHER" id="PTHR10916">
    <property type="entry name" value="60S RIBOSOMAL PROTEIN L35/50S RIBOSOMAL PROTEIN L29"/>
    <property type="match status" value="1"/>
</dbReference>
<dbReference type="PANTHER" id="PTHR10916:SF0">
    <property type="entry name" value="LARGE RIBOSOMAL SUBUNIT PROTEIN UL29C"/>
    <property type="match status" value="1"/>
</dbReference>
<dbReference type="Pfam" id="PF00831">
    <property type="entry name" value="Ribosomal_L29"/>
    <property type="match status" value="1"/>
</dbReference>
<dbReference type="SUPFAM" id="SSF46561">
    <property type="entry name" value="Ribosomal protein L29 (L29p)"/>
    <property type="match status" value="1"/>
</dbReference>
<organism evidence="6">
    <name type="scientific">Spinacia oleracea</name>
    <name type="common">Spinach</name>
    <dbReference type="NCBI Taxonomy" id="3562"/>
    <lineage>
        <taxon>Eukaryota</taxon>
        <taxon>Viridiplantae</taxon>
        <taxon>Streptophyta</taxon>
        <taxon>Embryophyta</taxon>
        <taxon>Tracheophyta</taxon>
        <taxon>Spermatophyta</taxon>
        <taxon>Magnoliopsida</taxon>
        <taxon>eudicotyledons</taxon>
        <taxon>Gunneridae</taxon>
        <taxon>Pentapetalae</taxon>
        <taxon>Caryophyllales</taxon>
        <taxon>Chenopodiaceae</taxon>
        <taxon>Chenopodioideae</taxon>
        <taxon>Anserineae</taxon>
        <taxon>Spinacia</taxon>
    </lineage>
</organism>
<reference key="1">
    <citation type="journal article" date="2014" name="Nature">
        <title>The genome of the recently domesticated crop plant sugar beet (Beta vulgaris).</title>
        <authorList>
            <person name="Dohm J.C."/>
            <person name="Minoche A.E."/>
            <person name="Holtgraewe D."/>
            <person name="Capella-Gutierrez S."/>
            <person name="Zakrzewski F."/>
            <person name="Tafer H."/>
            <person name="Rupp O."/>
            <person name="Soerensen T.R."/>
            <person name="Stracke R."/>
            <person name="Reinhardt R."/>
            <person name="Goesmann A."/>
            <person name="Kraft T."/>
            <person name="Schulz B."/>
            <person name="Stadler P.F."/>
            <person name="Schmidt T."/>
            <person name="Gabaldon T."/>
            <person name="Lehrach H."/>
            <person name="Weisshaar B."/>
            <person name="Himmelbauer H."/>
        </authorList>
    </citation>
    <scope>NUCLEOTIDE SEQUENCE [LARGE SCALE GENOMIC DNA]</scope>
    <source>
        <strain>cv. Viroflay</strain>
        <tissue>Leaf</tissue>
    </source>
</reference>
<reference key="2">
    <citation type="journal article" date="2000" name="J. Biol. Chem.">
        <title>The plastid ribosomal proteins. Identification of all the proteins in the 50S subunit of an organelle ribosome (chloroplast).</title>
        <authorList>
            <person name="Yamaguchi K."/>
            <person name="Subramanian A.R."/>
        </authorList>
    </citation>
    <scope>PROTEIN SEQUENCE OF 59-84</scope>
    <scope>SUBUNIT</scope>
    <scope>SUBCELLULAR LOCATION</scope>
    <scope>MASS SPECTROMETRY</scope>
    <source>
        <strain>cv. Alwaro</strain>
        <tissue>Leaf</tissue>
    </source>
</reference>
<reference key="3">
    <citation type="journal article" date="2007" name="Proc. Natl. Acad. Sci. U.S.A.">
        <title>Cryo-EM study of the spinach chloroplast ribosome reveals the structural and functional roles of plastid-specific ribosomal proteins.</title>
        <authorList>
            <person name="Sharma M.R."/>
            <person name="Wilson D.N."/>
            <person name="Datta P.P."/>
            <person name="Barat C."/>
            <person name="Schluenzen F."/>
            <person name="Fucini P."/>
            <person name="Agrawal R.K."/>
        </authorList>
    </citation>
    <scope>STRUCTURE BY ELECTRON MICROSCOPY (9.4 ANGSTROMS)</scope>
</reference>
<reference key="4">
    <citation type="journal article" date="2016" name="Sci. Rep.">
        <title>Cryo-EM structure of the large subunit of the spinach chloroplast ribosome.</title>
        <authorList>
            <person name="Ahmed T."/>
            <person name="Yin Z."/>
            <person name="Bhushan S."/>
        </authorList>
    </citation>
    <scope>STRUCTURE BY ELECTRON MICROSCOPY (3.50 ANGSTROMS)</scope>
</reference>
<reference key="5">
    <citation type="journal article" date="2017" name="EMBO J.">
        <title>The complete structure of the chloroplast 70S ribosome in complex with translation factor pY.</title>
        <authorList>
            <person name="Bieri P."/>
            <person name="Leibundgut M."/>
            <person name="Saurer M."/>
            <person name="Boehringer D."/>
            <person name="Ban N."/>
        </authorList>
    </citation>
    <scope>STRUCTURE BY ELECTRON MICROSCOPY (3.25 ANGSTROMS)</scope>
    <scope>SUBUNIT</scope>
    <scope>SUBCELLULAR LOCATION</scope>
</reference>
<protein>
    <recommendedName>
        <fullName evidence="5">Large ribosomal subunit protein uL29c</fullName>
    </recommendedName>
    <alternativeName>
        <fullName evidence="4">50S ribosomal protein L29, chloroplastic</fullName>
    </alternativeName>
    <alternativeName>
        <fullName>CL29</fullName>
    </alternativeName>
</protein>
<gene>
    <name type="primary">RPL29</name>
    <name type="ORF">SOVF_096810</name>
</gene>
<evidence type="ECO:0000256" key="1">
    <source>
        <dbReference type="SAM" id="MobiDB-lite"/>
    </source>
</evidence>
<evidence type="ECO:0000269" key="2">
    <source>
    </source>
</evidence>
<evidence type="ECO:0000269" key="3">
    <source>
    </source>
</evidence>
<evidence type="ECO:0000303" key="4">
    <source>
    </source>
</evidence>
<evidence type="ECO:0000303" key="5">
    <source>
    </source>
</evidence>
<evidence type="ECO:0000305" key="6"/>
<evidence type="ECO:0000305" key="7">
    <source>
    </source>
</evidence>
<evidence type="ECO:0000305" key="8">
    <source>
    </source>
</evidence>
<evidence type="ECO:0007829" key="9">
    <source>
        <dbReference type="PDB" id="5MMI"/>
    </source>
</evidence>
<keyword id="KW-0002">3D-structure</keyword>
<keyword id="KW-0150">Chloroplast</keyword>
<keyword id="KW-0903">Direct protein sequencing</keyword>
<keyword id="KW-0934">Plastid</keyword>
<keyword id="KW-1185">Reference proteome</keyword>
<keyword id="KW-0687">Ribonucleoprotein</keyword>
<keyword id="KW-0689">Ribosomal protein</keyword>
<keyword id="KW-0809">Transit peptide</keyword>
<comment type="function">
    <text evidence="7 8">Component of the chloroplast ribosome (chloro-ribosome), a dedicated translation machinery responsible for the synthesis of chloroplast genome-encoded proteins, including proteins of the transcription and translation machinery and components of the photosynthetic apparatus.</text>
</comment>
<comment type="subunit">
    <text evidence="2 3">Component of the chloroplast large ribosomal subunit (LSU). Mature 70S chloroplast ribosomes of higher plants consist of a small (30S) and a large (50S) subunit. The 30S small subunit contains 1 molecule of ribosomal RNA (16S rRNA) and 24 different proteins. The 50S large subunit contains 3 rRNA molecules (23S, 5S and 4.5S rRNA) and 33 different proteins.</text>
</comment>
<comment type="subcellular location">
    <subcellularLocation>
        <location evidence="2 3">Plastid</location>
        <location evidence="2 3">Chloroplast</location>
    </subcellularLocation>
</comment>
<comment type="mass spectrometry" mass="13502.1" method="Electrospray" evidence="2"/>
<comment type="similarity">
    <text evidence="6">Belongs to the universal ribosomal protein uL29 family.</text>
</comment>
<name>RK29_SPIOL</name>